<proteinExistence type="evidence at protein level"/>
<organism>
    <name type="scientific">Staphylococcus aureus (strain Mu50 / ATCC 700699)</name>
    <dbReference type="NCBI Taxonomy" id="158878"/>
    <lineage>
        <taxon>Bacteria</taxon>
        <taxon>Bacillati</taxon>
        <taxon>Bacillota</taxon>
        <taxon>Bacilli</taxon>
        <taxon>Bacillales</taxon>
        <taxon>Staphylococcaceae</taxon>
        <taxon>Staphylococcus</taxon>
    </lineage>
</organism>
<feature type="signal peptide" evidence="1">
    <location>
        <begin position="1"/>
        <end position="27"/>
    </location>
</feature>
<feature type="chain" id="PRO_0000320313" description="Probable transglycosylase SceD">
    <location>
        <begin position="28"/>
        <end position="231"/>
    </location>
</feature>
<feature type="region of interest" description="Disordered" evidence="2">
    <location>
        <begin position="93"/>
        <end position="152"/>
    </location>
</feature>
<feature type="compositionally biased region" description="Polar residues" evidence="2">
    <location>
        <begin position="93"/>
        <end position="116"/>
    </location>
</feature>
<feature type="compositionally biased region" description="Low complexity" evidence="2">
    <location>
        <begin position="119"/>
        <end position="137"/>
    </location>
</feature>
<feature type="compositionally biased region" description="Polar residues" evidence="2">
    <location>
        <begin position="138"/>
        <end position="152"/>
    </location>
</feature>
<accession>Q99SG2</accession>
<comment type="function">
    <text evidence="1">Is able to cleave peptidoglycan and affects clumping and separation of bacterial cells.</text>
</comment>
<comment type="subcellular location">
    <subcellularLocation>
        <location evidence="1">Secreted</location>
    </subcellularLocation>
</comment>
<comment type="induction">
    <text evidence="1">Positively regulated by sigma B factor.</text>
</comment>
<comment type="similarity">
    <text evidence="3">Belongs to the transglycosylase family. SceD subfamily.</text>
</comment>
<evidence type="ECO:0000250" key="1"/>
<evidence type="ECO:0000256" key="2">
    <source>
        <dbReference type="SAM" id="MobiDB-lite"/>
    </source>
</evidence>
<evidence type="ECO:0000305" key="3"/>
<dbReference type="EC" id="3.2.-.-"/>
<dbReference type="EMBL" id="BA000017">
    <property type="protein sequence ID" value="BAB58257.1"/>
    <property type="molecule type" value="Genomic_DNA"/>
</dbReference>
<dbReference type="RefSeq" id="WP_000752005.1">
    <property type="nucleotide sequence ID" value="NC_002758.2"/>
</dbReference>
<dbReference type="SMR" id="Q99SG2"/>
<dbReference type="KEGG" id="sav:SAV2095"/>
<dbReference type="HOGENOM" id="CLU_099865_0_0_9"/>
<dbReference type="Proteomes" id="UP000002481">
    <property type="component" value="Chromosome"/>
</dbReference>
<dbReference type="GO" id="GO:0005576">
    <property type="term" value="C:extracellular region"/>
    <property type="evidence" value="ECO:0007669"/>
    <property type="project" value="UniProtKB-SubCell"/>
</dbReference>
<dbReference type="GO" id="GO:0016798">
    <property type="term" value="F:hydrolase activity, acting on glycosyl bonds"/>
    <property type="evidence" value="ECO:0007669"/>
    <property type="project" value="UniProtKB-KW"/>
</dbReference>
<dbReference type="CDD" id="cd13925">
    <property type="entry name" value="RPF"/>
    <property type="match status" value="1"/>
</dbReference>
<dbReference type="Gene3D" id="1.10.530.10">
    <property type="match status" value="1"/>
</dbReference>
<dbReference type="InterPro" id="IPR023346">
    <property type="entry name" value="Lysozyme-like_dom_sf"/>
</dbReference>
<dbReference type="InterPro" id="IPR010618">
    <property type="entry name" value="RPF"/>
</dbReference>
<dbReference type="Pfam" id="PF06737">
    <property type="entry name" value="Transglycosylas"/>
    <property type="match status" value="1"/>
</dbReference>
<dbReference type="SUPFAM" id="SSF53955">
    <property type="entry name" value="Lysozyme-like"/>
    <property type="match status" value="1"/>
</dbReference>
<protein>
    <recommendedName>
        <fullName>Probable transglycosylase SceD</fullName>
        <ecNumber>3.2.-.-</ecNumber>
    </recommendedName>
</protein>
<reference key="1">
    <citation type="journal article" date="2001" name="Lancet">
        <title>Whole genome sequencing of meticillin-resistant Staphylococcus aureus.</title>
        <authorList>
            <person name="Kuroda M."/>
            <person name="Ohta T."/>
            <person name="Uchiyama I."/>
            <person name="Baba T."/>
            <person name="Yuzawa H."/>
            <person name="Kobayashi I."/>
            <person name="Cui L."/>
            <person name="Oguchi A."/>
            <person name="Aoki K."/>
            <person name="Nagai Y."/>
            <person name="Lian J.-Q."/>
            <person name="Ito T."/>
            <person name="Kanamori M."/>
            <person name="Matsumaru H."/>
            <person name="Maruyama A."/>
            <person name="Murakami H."/>
            <person name="Hosoyama A."/>
            <person name="Mizutani-Ui Y."/>
            <person name="Takahashi N.K."/>
            <person name="Sawano T."/>
            <person name="Inoue R."/>
            <person name="Kaito C."/>
            <person name="Sekimizu K."/>
            <person name="Hirakawa H."/>
            <person name="Kuhara S."/>
            <person name="Goto S."/>
            <person name="Yabuzaki J."/>
            <person name="Kanehisa M."/>
            <person name="Yamashita A."/>
            <person name="Oshima K."/>
            <person name="Furuya K."/>
            <person name="Yoshino C."/>
            <person name="Shiba T."/>
            <person name="Hattori M."/>
            <person name="Ogasawara N."/>
            <person name="Hayashi H."/>
            <person name="Hiramatsu K."/>
        </authorList>
    </citation>
    <scope>NUCLEOTIDE SEQUENCE [LARGE SCALE GENOMIC DNA]</scope>
    <source>
        <strain>Mu50 / ATCC 700699</strain>
    </source>
</reference>
<reference key="2">
    <citation type="journal article" date="2007" name="J. Proteome Res.">
        <title>Comparative proteomics analyses reveal a potential biomarker for the detection of vancomycin-intermediate Staphylococcus aureus strains.</title>
        <authorList>
            <person name="Drummelsmith J."/>
            <person name="Winstall E."/>
            <person name="Bergeron M.G."/>
            <person name="Poirier G.G."/>
            <person name="Ouellette M."/>
        </authorList>
    </citation>
    <scope>IDENTIFICATION BY MASS SPECTROMETRY</scope>
    <scope>MRNA EXPRESSION</scope>
</reference>
<keyword id="KW-0326">Glycosidase</keyword>
<keyword id="KW-0378">Hydrolase</keyword>
<keyword id="KW-0964">Secreted</keyword>
<keyword id="KW-0732">Signal</keyword>
<name>SCED_STAAM</name>
<sequence>MKKTLLASSLAVGLGIVAGNAGHEAHASEADLNKASLAQMAQSNDQTLNQKPIEAGAYNYTFDYEGFTYHFESDGTHFAWNYHATGANGANMSAQAPATNNVEPSAVQANQVQSQEVEAPQNAQTQQPQASTSNNSQVTATPTESKASEGSSVNVNAHLKQIAQRESGGNIHAVNPTSGAAGKYQFLQSTWDSVAPAKYKGVSPANAPESVQDAAAVKLYNTGGAGHWVTA</sequence>
<gene>
    <name type="primary">sceD</name>
    <name type="ordered locus">SAV2095</name>
</gene>